<reference key="1">
    <citation type="journal article" date="2003" name="Proc. Natl. Acad. Sci. U.S.A.">
        <title>The complete genome sequence of the Arabidopsis and tomato pathogen Pseudomonas syringae pv. tomato DC3000.</title>
        <authorList>
            <person name="Buell C.R."/>
            <person name="Joardar V."/>
            <person name="Lindeberg M."/>
            <person name="Selengut J."/>
            <person name="Paulsen I.T."/>
            <person name="Gwinn M.L."/>
            <person name="Dodson R.J."/>
            <person name="DeBoy R.T."/>
            <person name="Durkin A.S."/>
            <person name="Kolonay J.F."/>
            <person name="Madupu R."/>
            <person name="Daugherty S.C."/>
            <person name="Brinkac L.M."/>
            <person name="Beanan M.J."/>
            <person name="Haft D.H."/>
            <person name="Nelson W.C."/>
            <person name="Davidsen T.M."/>
            <person name="Zafar N."/>
            <person name="Zhou L."/>
            <person name="Liu J."/>
            <person name="Yuan Q."/>
            <person name="Khouri H.M."/>
            <person name="Fedorova N.B."/>
            <person name="Tran B."/>
            <person name="Russell D."/>
            <person name="Berry K.J."/>
            <person name="Utterback T.R."/>
            <person name="Van Aken S.E."/>
            <person name="Feldblyum T.V."/>
            <person name="D'Ascenzo M."/>
            <person name="Deng W.-L."/>
            <person name="Ramos A.R."/>
            <person name="Alfano J.R."/>
            <person name="Cartinhour S."/>
            <person name="Chatterjee A.K."/>
            <person name="Delaney T.P."/>
            <person name="Lazarowitz S.G."/>
            <person name="Martin G.B."/>
            <person name="Schneider D.J."/>
            <person name="Tang X."/>
            <person name="Bender C.L."/>
            <person name="White O."/>
            <person name="Fraser C.M."/>
            <person name="Collmer A."/>
        </authorList>
    </citation>
    <scope>NUCLEOTIDE SEQUENCE [LARGE SCALE GENOMIC DNA]</scope>
    <source>
        <strain>ATCC BAA-871 / DC3000</strain>
    </source>
</reference>
<feature type="chain" id="PRO_0000115516" description="Small ribosomal subunit protein uS15">
    <location>
        <begin position="1"/>
        <end position="89"/>
    </location>
</feature>
<organism>
    <name type="scientific">Pseudomonas syringae pv. tomato (strain ATCC BAA-871 / DC3000)</name>
    <dbReference type="NCBI Taxonomy" id="223283"/>
    <lineage>
        <taxon>Bacteria</taxon>
        <taxon>Pseudomonadati</taxon>
        <taxon>Pseudomonadota</taxon>
        <taxon>Gammaproteobacteria</taxon>
        <taxon>Pseudomonadales</taxon>
        <taxon>Pseudomonadaceae</taxon>
        <taxon>Pseudomonas</taxon>
    </lineage>
</organism>
<evidence type="ECO:0000255" key="1">
    <source>
        <dbReference type="HAMAP-Rule" id="MF_01343"/>
    </source>
</evidence>
<evidence type="ECO:0000305" key="2"/>
<accession>Q87WQ7</accession>
<name>RS15_PSESM</name>
<protein>
    <recommendedName>
        <fullName evidence="1">Small ribosomal subunit protein uS15</fullName>
    </recommendedName>
    <alternativeName>
        <fullName evidence="2">30S ribosomal protein S15</fullName>
    </alternativeName>
</protein>
<sequence>MALSVEEKAQIVTDYQQAVGDTGSPEVQVALLTANINKLQGHFKANGKDHHSRRGLIRMVNQRRKLLDYLKGKDVSRYSALIGRLGLRR</sequence>
<proteinExistence type="inferred from homology"/>
<dbReference type="EMBL" id="AE016853">
    <property type="protein sequence ID" value="AAO57936.1"/>
    <property type="molecule type" value="Genomic_DNA"/>
</dbReference>
<dbReference type="RefSeq" id="NP_794241.1">
    <property type="nucleotide sequence ID" value="NC_004578.1"/>
</dbReference>
<dbReference type="RefSeq" id="WP_002555121.1">
    <property type="nucleotide sequence ID" value="NC_004578.1"/>
</dbReference>
<dbReference type="SMR" id="Q87WQ7"/>
<dbReference type="STRING" id="223283.PSPTO_4487"/>
<dbReference type="GeneID" id="96220657"/>
<dbReference type="KEGG" id="pst:PSPTO_4487"/>
<dbReference type="PATRIC" id="fig|223283.9.peg.4603"/>
<dbReference type="eggNOG" id="COG0184">
    <property type="taxonomic scope" value="Bacteria"/>
</dbReference>
<dbReference type="HOGENOM" id="CLU_148518_0_0_6"/>
<dbReference type="OrthoDB" id="9799262at2"/>
<dbReference type="PhylomeDB" id="Q87WQ7"/>
<dbReference type="Proteomes" id="UP000002515">
    <property type="component" value="Chromosome"/>
</dbReference>
<dbReference type="GO" id="GO:0022627">
    <property type="term" value="C:cytosolic small ribosomal subunit"/>
    <property type="evidence" value="ECO:0007669"/>
    <property type="project" value="TreeGrafter"/>
</dbReference>
<dbReference type="GO" id="GO:0019843">
    <property type="term" value="F:rRNA binding"/>
    <property type="evidence" value="ECO:0007669"/>
    <property type="project" value="UniProtKB-UniRule"/>
</dbReference>
<dbReference type="GO" id="GO:0003735">
    <property type="term" value="F:structural constituent of ribosome"/>
    <property type="evidence" value="ECO:0007669"/>
    <property type="project" value="InterPro"/>
</dbReference>
<dbReference type="GO" id="GO:0006412">
    <property type="term" value="P:translation"/>
    <property type="evidence" value="ECO:0007669"/>
    <property type="project" value="UniProtKB-UniRule"/>
</dbReference>
<dbReference type="CDD" id="cd00353">
    <property type="entry name" value="Ribosomal_S15p_S13e"/>
    <property type="match status" value="1"/>
</dbReference>
<dbReference type="FunFam" id="1.10.287.10:FF:000002">
    <property type="entry name" value="30S ribosomal protein S15"/>
    <property type="match status" value="1"/>
</dbReference>
<dbReference type="Gene3D" id="6.10.250.3130">
    <property type="match status" value="1"/>
</dbReference>
<dbReference type="Gene3D" id="1.10.287.10">
    <property type="entry name" value="S15/NS1, RNA-binding"/>
    <property type="match status" value="1"/>
</dbReference>
<dbReference type="HAMAP" id="MF_01343_B">
    <property type="entry name" value="Ribosomal_uS15_B"/>
    <property type="match status" value="1"/>
</dbReference>
<dbReference type="InterPro" id="IPR000589">
    <property type="entry name" value="Ribosomal_uS15"/>
</dbReference>
<dbReference type="InterPro" id="IPR005290">
    <property type="entry name" value="Ribosomal_uS15_bac-type"/>
</dbReference>
<dbReference type="InterPro" id="IPR009068">
    <property type="entry name" value="uS15_NS1_RNA-bd_sf"/>
</dbReference>
<dbReference type="NCBIfam" id="TIGR00952">
    <property type="entry name" value="S15_bact"/>
    <property type="match status" value="1"/>
</dbReference>
<dbReference type="PANTHER" id="PTHR23321">
    <property type="entry name" value="RIBOSOMAL PROTEIN S15, BACTERIAL AND ORGANELLAR"/>
    <property type="match status" value="1"/>
</dbReference>
<dbReference type="PANTHER" id="PTHR23321:SF26">
    <property type="entry name" value="SMALL RIBOSOMAL SUBUNIT PROTEIN US15M"/>
    <property type="match status" value="1"/>
</dbReference>
<dbReference type="Pfam" id="PF00312">
    <property type="entry name" value="Ribosomal_S15"/>
    <property type="match status" value="1"/>
</dbReference>
<dbReference type="SMART" id="SM01387">
    <property type="entry name" value="Ribosomal_S15"/>
    <property type="match status" value="1"/>
</dbReference>
<dbReference type="SUPFAM" id="SSF47060">
    <property type="entry name" value="S15/NS1 RNA-binding domain"/>
    <property type="match status" value="1"/>
</dbReference>
<dbReference type="PROSITE" id="PS00362">
    <property type="entry name" value="RIBOSOMAL_S15"/>
    <property type="match status" value="1"/>
</dbReference>
<keyword id="KW-1185">Reference proteome</keyword>
<keyword id="KW-0687">Ribonucleoprotein</keyword>
<keyword id="KW-0689">Ribosomal protein</keyword>
<keyword id="KW-0694">RNA-binding</keyword>
<keyword id="KW-0699">rRNA-binding</keyword>
<comment type="function">
    <text evidence="1">One of the primary rRNA binding proteins, it binds directly to 16S rRNA where it helps nucleate assembly of the platform of the 30S subunit by binding and bridging several RNA helices of the 16S rRNA.</text>
</comment>
<comment type="function">
    <text evidence="1">Forms an intersubunit bridge (bridge B4) with the 23S rRNA of the 50S subunit in the ribosome.</text>
</comment>
<comment type="subunit">
    <text evidence="1">Part of the 30S ribosomal subunit. Forms a bridge to the 50S subunit in the 70S ribosome, contacting the 23S rRNA.</text>
</comment>
<comment type="similarity">
    <text evidence="1">Belongs to the universal ribosomal protein uS15 family.</text>
</comment>
<gene>
    <name evidence="1" type="primary">rpsO</name>
    <name type="ordered locus">PSPTO_4487</name>
</gene>